<accession>P08082</accession>
<proteinExistence type="evidence at protein level"/>
<feature type="chain" id="PRO_0000205773" description="Clathrin light chain B">
    <location>
        <begin position="1"/>
        <end position="229"/>
    </location>
</feature>
<feature type="region of interest" description="Disordered" evidence="6">
    <location>
        <begin position="1"/>
        <end position="80"/>
    </location>
</feature>
<feature type="region of interest" description="Involved in binding clathrin heavy chain">
    <location>
        <begin position="93"/>
        <end position="155"/>
    </location>
</feature>
<feature type="compositionally biased region" description="Low complexity" evidence="6">
    <location>
        <begin position="1"/>
        <end position="17"/>
    </location>
</feature>
<feature type="compositionally biased region" description="Low complexity" evidence="6">
    <location>
        <begin position="45"/>
        <end position="58"/>
    </location>
</feature>
<feature type="modified residue" description="Phosphoserine" evidence="2">
    <location>
        <position position="11"/>
    </location>
</feature>
<feature type="modified residue" description="Phosphoserine" evidence="2">
    <location>
        <position position="13"/>
    </location>
</feature>
<feature type="modified residue" description="Phosphothreonine" evidence="4">
    <location>
        <position position="187"/>
    </location>
</feature>
<feature type="modified residue" description="N6-acetyllysine" evidence="5">
    <location>
        <position position="204"/>
    </location>
</feature>
<feature type="modified residue" description="Phosphoserine" evidence="3">
    <location>
        <position position="217"/>
    </location>
</feature>
<feature type="disulfide bond" evidence="1">
    <location>
        <begin position="199"/>
        <end position="209"/>
    </location>
</feature>
<feature type="splice variant" id="VSP_001099" description="In isoform Non-brain." evidence="7">
    <location>
        <begin position="156"/>
        <end position="173"/>
    </location>
</feature>
<comment type="function">
    <text>Clathrin is the major protein of the polyhedral coat of coated pits and vesicles.</text>
</comment>
<comment type="subunit">
    <text>Clathrin coats are formed from molecules containing 3 heavy chains and 3 light chains. Interacts (via N-terminus) with HIP1. Interacts with HIP1R.</text>
</comment>
<comment type="subcellular location">
    <subcellularLocation>
        <location>Cytoplasmic vesicle membrane</location>
        <topology>Peripheral membrane protein</topology>
        <orientation>Cytoplasmic side</orientation>
    </subcellularLocation>
    <subcellularLocation>
        <location>Membrane</location>
        <location>Coated pit</location>
        <topology>Peripheral membrane protein</topology>
        <orientation>Cytoplasmic side</orientation>
    </subcellularLocation>
    <text>Cytoplasmic face of coated pits and vesicles.</text>
</comment>
<comment type="alternative products">
    <event type="alternative splicing"/>
    <isoform>
        <id>P08082-1</id>
        <name>Brain</name>
        <sequence type="displayed"/>
    </isoform>
    <isoform>
        <id>P08082-2</id>
        <name>Non-brain</name>
        <sequence type="described" ref="VSP_001099"/>
    </isoform>
</comment>
<comment type="similarity">
    <text evidence="8">Belongs to the clathrin light chain family.</text>
</comment>
<keyword id="KW-0007">Acetylation</keyword>
<keyword id="KW-0025">Alternative splicing</keyword>
<keyword id="KW-0106">Calcium</keyword>
<keyword id="KW-0168">Coated pit</keyword>
<keyword id="KW-0968">Cytoplasmic vesicle</keyword>
<keyword id="KW-0903">Direct protein sequencing</keyword>
<keyword id="KW-1015">Disulfide bond</keyword>
<keyword id="KW-0472">Membrane</keyword>
<keyword id="KW-0597">Phosphoprotein</keyword>
<keyword id="KW-1185">Reference proteome</keyword>
<evidence type="ECO:0000250" key="1"/>
<evidence type="ECO:0000250" key="2">
    <source>
        <dbReference type="UniProtKB" id="P04975"/>
    </source>
</evidence>
<evidence type="ECO:0000250" key="3">
    <source>
        <dbReference type="UniProtKB" id="P09496"/>
    </source>
</evidence>
<evidence type="ECO:0000250" key="4">
    <source>
        <dbReference type="UniProtKB" id="P09497"/>
    </source>
</evidence>
<evidence type="ECO:0000250" key="5">
    <source>
        <dbReference type="UniProtKB" id="Q6IRU5"/>
    </source>
</evidence>
<evidence type="ECO:0000256" key="6">
    <source>
        <dbReference type="SAM" id="MobiDB-lite"/>
    </source>
</evidence>
<evidence type="ECO:0000303" key="7">
    <source>
    </source>
</evidence>
<evidence type="ECO:0000305" key="8"/>
<protein>
    <recommendedName>
        <fullName>Clathrin light chain B</fullName>
        <shortName>Lcb</shortName>
    </recommendedName>
</protein>
<organism>
    <name type="scientific">Rattus norvegicus</name>
    <name type="common">Rat</name>
    <dbReference type="NCBI Taxonomy" id="10116"/>
    <lineage>
        <taxon>Eukaryota</taxon>
        <taxon>Metazoa</taxon>
        <taxon>Chordata</taxon>
        <taxon>Craniata</taxon>
        <taxon>Vertebrata</taxon>
        <taxon>Euteleostomi</taxon>
        <taxon>Mammalia</taxon>
        <taxon>Eutheria</taxon>
        <taxon>Euarchontoglires</taxon>
        <taxon>Glires</taxon>
        <taxon>Rodentia</taxon>
        <taxon>Myomorpha</taxon>
        <taxon>Muroidea</taxon>
        <taxon>Muridae</taxon>
        <taxon>Murinae</taxon>
        <taxon>Rattus</taxon>
    </lineage>
</organism>
<sequence>MAEDFGFFSSSESGAPEAAEEDPAAAFLAQQESEIAGIENDSGFGAPAASQVASAQPGLASGGGSEDMGTTVNGDVFQEANGPADGYAAIAQADRLTQEPESIRKWREEQKKRLQELDAASKVTEQEWREKAKKDLEEWNQRQSEQVEKNKINNRIADKAFYQQPDADTIGYVASEEAFVKESKEETPGTEWEKVAQLCDFNPKSSKQCKDVSRLRSVLMSLKQTPLSR</sequence>
<gene>
    <name type="primary">Cltb</name>
</gene>
<name>CLCB_RAT</name>
<dbReference type="EMBL" id="M15883">
    <property type="protein sequence ID" value="AAA40890.1"/>
    <property type="molecule type" value="mRNA"/>
</dbReference>
<dbReference type="EMBL" id="M19262">
    <property type="protein sequence ID" value="AAA40891.1"/>
    <property type="molecule type" value="mRNA"/>
</dbReference>
<dbReference type="PIR" id="B25994">
    <property type="entry name" value="LRRTB2"/>
</dbReference>
<dbReference type="RefSeq" id="NP_446287.1">
    <molecule id="P08082-1"/>
    <property type="nucleotide sequence ID" value="NM_053835.1"/>
</dbReference>
<dbReference type="RefSeq" id="XP_006253657.1">
    <molecule id="P08082-2"/>
    <property type="nucleotide sequence ID" value="XM_006253595.5"/>
</dbReference>
<dbReference type="SMR" id="P08082"/>
<dbReference type="BioGRID" id="250496">
    <property type="interactions" value="7"/>
</dbReference>
<dbReference type="FunCoup" id="P08082">
    <property type="interactions" value="2487"/>
</dbReference>
<dbReference type="IntAct" id="P08082">
    <property type="interactions" value="3"/>
</dbReference>
<dbReference type="MINT" id="P08082"/>
<dbReference type="STRING" id="10116.ENSRNOP00000023651"/>
<dbReference type="iPTMnet" id="P08082"/>
<dbReference type="PhosphoSitePlus" id="P08082"/>
<dbReference type="SwissPalm" id="P08082"/>
<dbReference type="jPOST" id="P08082"/>
<dbReference type="PaxDb" id="10116-ENSRNOP00000023651"/>
<dbReference type="Ensembl" id="ENSRNOT00000023651.7">
    <molecule id="P08082-1"/>
    <property type="protein sequence ID" value="ENSRNOP00000023651.2"/>
    <property type="gene ID" value="ENSRNOG00000017506.8"/>
</dbReference>
<dbReference type="Ensembl" id="ENSRNOT00000115689.1">
    <molecule id="P08082-2"/>
    <property type="protein sequence ID" value="ENSRNOP00000085439.1"/>
    <property type="gene ID" value="ENSRNOG00000017506.8"/>
</dbReference>
<dbReference type="GeneID" id="116561"/>
<dbReference type="KEGG" id="rno:116561"/>
<dbReference type="UCSC" id="RGD:621353">
    <molecule id="P08082-1"/>
    <property type="organism name" value="rat"/>
</dbReference>
<dbReference type="AGR" id="RGD:621353"/>
<dbReference type="CTD" id="1212"/>
<dbReference type="RGD" id="621353">
    <property type="gene designation" value="Cltb"/>
</dbReference>
<dbReference type="eggNOG" id="KOG4031">
    <property type="taxonomic scope" value="Eukaryota"/>
</dbReference>
<dbReference type="GeneTree" id="ENSGT00940000160186"/>
<dbReference type="HOGENOM" id="CLU_091462_1_0_1"/>
<dbReference type="InParanoid" id="P08082"/>
<dbReference type="OMA" id="KEWVCER"/>
<dbReference type="OrthoDB" id="5512at2759"/>
<dbReference type="PhylomeDB" id="P08082"/>
<dbReference type="TreeFam" id="TF313162"/>
<dbReference type="Reactome" id="R-RNO-190873">
    <property type="pathway name" value="Gap junction degradation"/>
</dbReference>
<dbReference type="Reactome" id="R-RNO-196025">
    <property type="pathway name" value="Formation of annular gap junctions"/>
</dbReference>
<dbReference type="Reactome" id="R-RNO-432720">
    <property type="pathway name" value="Lysosome Vesicle Biogenesis"/>
</dbReference>
<dbReference type="Reactome" id="R-RNO-5099900">
    <property type="pathway name" value="WNT5A-dependent internalization of FZD4"/>
</dbReference>
<dbReference type="Reactome" id="R-RNO-5140745">
    <property type="pathway name" value="WNT5A-dependent internalization of FZD2, FZD5 and ROR2"/>
</dbReference>
<dbReference type="Reactome" id="R-RNO-8856825">
    <property type="pathway name" value="Cargo recognition for clathrin-mediated endocytosis"/>
</dbReference>
<dbReference type="Reactome" id="R-RNO-8856828">
    <property type="pathway name" value="Clathrin-mediated endocytosis"/>
</dbReference>
<dbReference type="PRO" id="PR:P08082"/>
<dbReference type="Proteomes" id="UP000002494">
    <property type="component" value="Chromosome 17"/>
</dbReference>
<dbReference type="Bgee" id="ENSRNOG00000017506">
    <property type="expression patterns" value="Expressed in heart and 20 other cell types or tissues"/>
</dbReference>
<dbReference type="GO" id="GO:0060170">
    <property type="term" value="C:ciliary membrane"/>
    <property type="evidence" value="ECO:0000266"/>
    <property type="project" value="RGD"/>
</dbReference>
<dbReference type="GO" id="GO:0030118">
    <property type="term" value="C:clathrin coat"/>
    <property type="evidence" value="ECO:0000314"/>
    <property type="project" value="RGD"/>
</dbReference>
<dbReference type="GO" id="GO:0030132">
    <property type="term" value="C:clathrin coat of coated pit"/>
    <property type="evidence" value="ECO:0000303"/>
    <property type="project" value="UniProtKB"/>
</dbReference>
<dbReference type="GO" id="GO:0030130">
    <property type="term" value="C:clathrin coat of trans-Golgi network vesicle"/>
    <property type="evidence" value="ECO:0007669"/>
    <property type="project" value="InterPro"/>
</dbReference>
<dbReference type="GO" id="GO:0030125">
    <property type="term" value="C:clathrin vesicle coat"/>
    <property type="evidence" value="ECO:0000318"/>
    <property type="project" value="GO_Central"/>
</dbReference>
<dbReference type="GO" id="GO:0005829">
    <property type="term" value="C:cytosol"/>
    <property type="evidence" value="ECO:0007669"/>
    <property type="project" value="Ensembl"/>
</dbReference>
<dbReference type="GO" id="GO:0005886">
    <property type="term" value="C:plasma membrane"/>
    <property type="evidence" value="ECO:0000266"/>
    <property type="project" value="RGD"/>
</dbReference>
<dbReference type="GO" id="GO:0098835">
    <property type="term" value="C:presynaptic endocytic zone membrane"/>
    <property type="evidence" value="ECO:0000314"/>
    <property type="project" value="SynGO"/>
</dbReference>
<dbReference type="GO" id="GO:0030672">
    <property type="term" value="C:synaptic vesicle membrane"/>
    <property type="evidence" value="ECO:0000314"/>
    <property type="project" value="SynGO"/>
</dbReference>
<dbReference type="GO" id="GO:0005802">
    <property type="term" value="C:trans-Golgi network"/>
    <property type="evidence" value="ECO:0000266"/>
    <property type="project" value="RGD"/>
</dbReference>
<dbReference type="GO" id="GO:0032050">
    <property type="term" value="F:clathrin heavy chain binding"/>
    <property type="evidence" value="ECO:0000318"/>
    <property type="project" value="GO_Central"/>
</dbReference>
<dbReference type="GO" id="GO:0005326">
    <property type="term" value="F:neurotransmitter transmembrane transporter activity"/>
    <property type="evidence" value="ECO:0000303"/>
    <property type="project" value="UniProtKB"/>
</dbReference>
<dbReference type="GO" id="GO:0042277">
    <property type="term" value="F:peptide binding"/>
    <property type="evidence" value="ECO:0000314"/>
    <property type="project" value="RGD"/>
</dbReference>
<dbReference type="GO" id="GO:0005198">
    <property type="term" value="F:structural molecule activity"/>
    <property type="evidence" value="ECO:0007669"/>
    <property type="project" value="InterPro"/>
</dbReference>
<dbReference type="GO" id="GO:0072583">
    <property type="term" value="P:clathrin-dependent endocytosis"/>
    <property type="evidence" value="ECO:0000318"/>
    <property type="project" value="GO_Central"/>
</dbReference>
<dbReference type="GO" id="GO:0006886">
    <property type="term" value="P:intracellular protein transport"/>
    <property type="evidence" value="ECO:0007669"/>
    <property type="project" value="InterPro"/>
</dbReference>
<dbReference type="GO" id="GO:0007269">
    <property type="term" value="P:neurotransmitter secretion"/>
    <property type="evidence" value="ECO:0000303"/>
    <property type="project" value="UniProtKB"/>
</dbReference>
<dbReference type="GO" id="GO:0006836">
    <property type="term" value="P:neurotransmitter transport"/>
    <property type="evidence" value="ECO:0000303"/>
    <property type="project" value="UniProtKB"/>
</dbReference>
<dbReference type="GO" id="GO:0016183">
    <property type="term" value="P:synaptic vesicle coating"/>
    <property type="evidence" value="ECO:0000303"/>
    <property type="project" value="UniProtKB"/>
</dbReference>
<dbReference type="GO" id="GO:0048488">
    <property type="term" value="P:synaptic vesicle endocytosis"/>
    <property type="evidence" value="ECO:0000314"/>
    <property type="project" value="SynGO"/>
</dbReference>
<dbReference type="InterPro" id="IPR000996">
    <property type="entry name" value="Clathrin_L-chain"/>
</dbReference>
<dbReference type="PANTHER" id="PTHR10639">
    <property type="entry name" value="CLATHRIN LIGHT CHAIN"/>
    <property type="match status" value="1"/>
</dbReference>
<dbReference type="PANTHER" id="PTHR10639:SF28">
    <property type="entry name" value="CLATHRIN LIGHT CHAIN B"/>
    <property type="match status" value="1"/>
</dbReference>
<dbReference type="Pfam" id="PF01086">
    <property type="entry name" value="Clathrin_lg_ch"/>
    <property type="match status" value="1"/>
</dbReference>
<dbReference type="PROSITE" id="PS00224">
    <property type="entry name" value="CLATHRIN_LIGHT_CHN_1"/>
    <property type="match status" value="1"/>
</dbReference>
<dbReference type="PROSITE" id="PS00581">
    <property type="entry name" value="CLATHRIN_LIGHT_CHN_2"/>
    <property type="match status" value="1"/>
</dbReference>
<reference key="1">
    <citation type="journal article" date="1987" name="Science">
        <title>Clathrin light chains LCA and LCB are similar, polymorphic, and share repeated heptad motifs.</title>
        <authorList>
            <person name="Kirchhausen T."/>
            <person name="Scarmato P."/>
            <person name="Harrison S.C."/>
            <person name="Monroe J.J."/>
            <person name="Chow E.P."/>
            <person name="Mattaliano R.J."/>
            <person name="Ramachandran K.L."/>
            <person name="Smart J.E."/>
            <person name="Ahn A.H."/>
            <person name="Brosius J."/>
        </authorList>
    </citation>
    <scope>NUCLEOTIDE SEQUENCE [MRNA] (ISOFORMS BRAIN AND NON-BRAIN)</scope>
</reference>
<reference key="2">
    <citation type="submission" date="2007-04" db="UniProtKB">
        <authorList>
            <person name="Lubec G."/>
            <person name="Afjehi-Sadat L."/>
            <person name="Chen W.-Q."/>
        </authorList>
    </citation>
    <scope>PROTEIN SEQUENCE OF 160-181</scope>
    <scope>IDENTIFICATION BY MASS SPECTROMETRY</scope>
    <source>
        <strain>Sprague-Dawley</strain>
        <tissue>Hippocampus</tissue>
        <tissue>Spinal cord</tissue>
    </source>
</reference>